<gene>
    <name type="primary">fliC</name>
    <name type="ordered locus">SCH_1962</name>
</gene>
<proteinExistence type="inferred from homology"/>
<name>FLIC_SALCH</name>
<accession>P06176</accession>
<accession>Q57N43</accession>
<keyword id="KW-0975">Bacterial flagellum</keyword>
<keyword id="KW-0964">Secreted</keyword>
<organism>
    <name type="scientific">Salmonella choleraesuis (strain SC-B67)</name>
    <dbReference type="NCBI Taxonomy" id="321314"/>
    <lineage>
        <taxon>Bacteria</taxon>
        <taxon>Pseudomonadati</taxon>
        <taxon>Pseudomonadota</taxon>
        <taxon>Gammaproteobacteria</taxon>
        <taxon>Enterobacterales</taxon>
        <taxon>Enterobacteriaceae</taxon>
        <taxon>Salmonella</taxon>
    </lineage>
</organism>
<reference key="1">
    <citation type="journal article" date="1985" name="J. Mol. Biol.">
        <title>Covalent structure of three phase-1 flagellar filament proteins of Salmonella.</title>
        <authorList>
            <person name="Wei L.-N."/>
            <person name="Joys T.M."/>
        </authorList>
    </citation>
    <scope>NUCLEOTIDE SEQUENCE [GENOMIC DNA]</scope>
    <source>
        <strain>ATCC 7001</strain>
    </source>
</reference>
<reference key="2">
    <citation type="journal article" date="2005" name="Nucleic Acids Res.">
        <title>The genome sequence of Salmonella enterica serovar Choleraesuis, a highly invasive and resistant zoonotic pathogen.</title>
        <authorList>
            <person name="Chiu C.-H."/>
            <person name="Tang P."/>
            <person name="Chu C."/>
            <person name="Hu S."/>
            <person name="Bao Q."/>
            <person name="Yu J."/>
            <person name="Chou Y.-Y."/>
            <person name="Wang H.-S."/>
            <person name="Lee Y.-S."/>
        </authorList>
    </citation>
    <scope>NUCLEOTIDE SEQUENCE [LARGE SCALE GENOMIC DNA]</scope>
    <source>
        <strain>SC-B67</strain>
    </source>
</reference>
<feature type="initiator methionine" description="Removed" evidence="1">
    <location>
        <position position="1"/>
    </location>
</feature>
<feature type="chain" id="PRO_0000182565" description="Flagellin">
    <location>
        <begin position="2"/>
        <end position="501"/>
    </location>
</feature>
<feature type="sequence conflict" description="In Ref. 1; CAA27129." evidence="2" ref="1">
    <original>T</original>
    <variation>R</variation>
    <location>
        <position position="265"/>
    </location>
</feature>
<feature type="sequence conflict" description="In Ref. 1." evidence="2" ref="1">
    <location>
        <begin position="296"/>
        <end position="307"/>
    </location>
</feature>
<feature type="sequence conflict" description="In Ref. 1; CAA27129." evidence="2" ref="1">
    <original>A</original>
    <variation>R</variation>
    <location>
        <position position="348"/>
    </location>
</feature>
<feature type="sequence conflict" description="In Ref. 1; CAA27129." evidence="2" ref="1">
    <original>A</original>
    <variation>R</variation>
    <location>
        <position position="406"/>
    </location>
</feature>
<dbReference type="EMBL" id="X03394">
    <property type="protein sequence ID" value="CAA27129.1"/>
    <property type="status" value="ALT_INIT"/>
    <property type="molecule type" value="Genomic_DNA"/>
</dbReference>
<dbReference type="EMBL" id="AE017220">
    <property type="protein sequence ID" value="AAX65868.1"/>
    <property type="molecule type" value="Genomic_DNA"/>
</dbReference>
<dbReference type="PIR" id="S09637">
    <property type="entry name" value="S09637"/>
</dbReference>
<dbReference type="RefSeq" id="WP_000079804.1">
    <property type="nucleotide sequence ID" value="NC_006905.1"/>
</dbReference>
<dbReference type="SMR" id="P06176"/>
<dbReference type="KEGG" id="sec:SCH_1962"/>
<dbReference type="HOGENOM" id="CLU_011142_7_2_6"/>
<dbReference type="Proteomes" id="UP000000538">
    <property type="component" value="Chromosome"/>
</dbReference>
<dbReference type="GO" id="GO:0009288">
    <property type="term" value="C:bacterial-type flagellum"/>
    <property type="evidence" value="ECO:0007669"/>
    <property type="project" value="UniProtKB-SubCell"/>
</dbReference>
<dbReference type="GO" id="GO:0005576">
    <property type="term" value="C:extracellular region"/>
    <property type="evidence" value="ECO:0007669"/>
    <property type="project" value="UniProtKB-SubCell"/>
</dbReference>
<dbReference type="GO" id="GO:0005198">
    <property type="term" value="F:structural molecule activity"/>
    <property type="evidence" value="ECO:0007669"/>
    <property type="project" value="InterPro"/>
</dbReference>
<dbReference type="Gene3D" id="6.10.280.190">
    <property type="match status" value="1"/>
</dbReference>
<dbReference type="Gene3D" id="2.30.220.10">
    <property type="entry name" value="f41 fragment of flagellin, C-terminal domain"/>
    <property type="match status" value="1"/>
</dbReference>
<dbReference type="Gene3D" id="2.170.280.10">
    <property type="entry name" value="f41 fragment of flagellin, middle domain"/>
    <property type="match status" value="1"/>
</dbReference>
<dbReference type="Gene3D" id="1.20.1330.10">
    <property type="entry name" value="f41 fragment of flagellin, N-terminal domain"/>
    <property type="match status" value="1"/>
</dbReference>
<dbReference type="Gene3D" id="6.10.10.10">
    <property type="entry name" value="Flagellar export chaperone, C-terminal domain"/>
    <property type="match status" value="1"/>
</dbReference>
<dbReference type="InterPro" id="IPR001492">
    <property type="entry name" value="Flagellin"/>
</dbReference>
<dbReference type="InterPro" id="IPR046358">
    <property type="entry name" value="Flagellin_C"/>
</dbReference>
<dbReference type="InterPro" id="IPR042187">
    <property type="entry name" value="Flagellin_C_sub2"/>
</dbReference>
<dbReference type="InterPro" id="IPR014981">
    <property type="entry name" value="Flagellin_D3"/>
</dbReference>
<dbReference type="InterPro" id="IPR001029">
    <property type="entry name" value="Flagellin_N"/>
</dbReference>
<dbReference type="InterPro" id="IPR049365">
    <property type="entry name" value="FLIC_barrel"/>
</dbReference>
<dbReference type="NCBIfam" id="NF005953">
    <property type="entry name" value="PRK08026.1"/>
    <property type="match status" value="1"/>
</dbReference>
<dbReference type="PANTHER" id="PTHR42792">
    <property type="entry name" value="FLAGELLIN"/>
    <property type="match status" value="1"/>
</dbReference>
<dbReference type="PANTHER" id="PTHR42792:SF2">
    <property type="entry name" value="FLAGELLIN"/>
    <property type="match status" value="1"/>
</dbReference>
<dbReference type="Pfam" id="PF00700">
    <property type="entry name" value="Flagellin_C"/>
    <property type="match status" value="1"/>
</dbReference>
<dbReference type="Pfam" id="PF08884">
    <property type="entry name" value="Flagellin_D3"/>
    <property type="match status" value="1"/>
</dbReference>
<dbReference type="Pfam" id="PF00669">
    <property type="entry name" value="Flagellin_N"/>
    <property type="match status" value="1"/>
</dbReference>
<dbReference type="Pfam" id="PF21504">
    <property type="entry name" value="FLIC_barrel"/>
    <property type="match status" value="1"/>
</dbReference>
<dbReference type="PRINTS" id="PR00207">
    <property type="entry name" value="FLAGELLIN"/>
</dbReference>
<dbReference type="SUPFAM" id="SSF64518">
    <property type="entry name" value="Phase 1 flagellin"/>
    <property type="match status" value="1"/>
</dbReference>
<comment type="function">
    <text>Flagellin is the subunit protein which polymerizes to form the filaments of bacterial flagella.</text>
</comment>
<comment type="subcellular location">
    <subcellularLocation>
        <location>Secreted</location>
    </subcellularLocation>
    <subcellularLocation>
        <location>Bacterial flagellum</location>
    </subcellularLocation>
</comment>
<comment type="miscellaneous">
    <text>Individual Salmonella serotypes usually alternate between the production of 2 antigenic forms of flagella, termed phase 1 and phase 2, each specified by separate structural genes.</text>
</comment>
<comment type="similarity">
    <text evidence="2">Belongs to the bacterial flagellin family.</text>
</comment>
<comment type="sequence caution" evidence="2">
    <conflict type="erroneous initiation">
        <sequence resource="EMBL-CDS" id="CAA27129"/>
    </conflict>
</comment>
<evidence type="ECO:0000250" key="1"/>
<evidence type="ECO:0000305" key="2"/>
<protein>
    <recommendedName>
        <fullName>Flagellin</fullName>
    </recommendedName>
    <alternativeName>
        <fullName>Phase 1-C flagellin</fullName>
    </alternativeName>
</protein>
<sequence length="501" mass="52112">MAQVINTNSLSLLTQNNLNKSQSALGTAIERLSSGLRINSAKDDAAGQAIANRFTANIKGLTQASRNANDGISIAQTTEGALNEINNNLQRVRELAVQSANSTNSQSDLDSIQAEITQRLNEIDRVSGQTQFNGVKVLAQDNTLTIQVGANDGETIDIDLKQINSQTLGLDTLNVQKKYDVSDTAVAASYSDSKQNIAVPDKTAITAKIGAATSGGAGIKADISFKDGKYYATVSGYDDAADTDKNGTYEVTVAADTGAVTFATTPTVVDLPTDAKAVSKVQQNDTEIAATNAKAALKAAGVADAEADTATLVKMSYTDNNGKVIDGGFAFKTSGGYYAASVDKSGAASLKVTSYVDATTGTEKTAANKLGGADGKTEVVTIDGKTYNASKAAGHNFKAQPELAEAAATTTENPLQKIDAALAQVDALRSDLGAVQNRFNSAITNLGNTVNNLSSARSRIEDSDYATEVSNMSRAQILQQAGTSVLAQANQVPQNVLSLLR</sequence>